<sequence>MAGTSLGTRFYRQIKRHPGLIPMIGFICLGMGSAGLYLLRLALRSPDVCWDRKNNPEPWNRLSPNDQYKFLAVSTDYKKLKKDRPDF</sequence>
<comment type="similarity">
    <text evidence="1">Belongs to the complex I NDUFA4 subunit family.</text>
</comment>
<name>NUA4L_MOUSE</name>
<evidence type="ECO:0000305" key="1"/>
<organism>
    <name type="scientific">Mus musculus</name>
    <name type="common">Mouse</name>
    <dbReference type="NCBI Taxonomy" id="10090"/>
    <lineage>
        <taxon>Eukaryota</taxon>
        <taxon>Metazoa</taxon>
        <taxon>Chordata</taxon>
        <taxon>Craniata</taxon>
        <taxon>Vertebrata</taxon>
        <taxon>Euteleostomi</taxon>
        <taxon>Mammalia</taxon>
        <taxon>Eutheria</taxon>
        <taxon>Euarchontoglires</taxon>
        <taxon>Glires</taxon>
        <taxon>Rodentia</taxon>
        <taxon>Myomorpha</taxon>
        <taxon>Muroidea</taxon>
        <taxon>Muridae</taxon>
        <taxon>Murinae</taxon>
        <taxon>Mus</taxon>
        <taxon>Mus</taxon>
    </lineage>
</organism>
<feature type="chain" id="PRO_0000245773" description="NADH dehydrogenase [ubiquinone] 1 alpha subcomplex subunit 4-like 2">
    <location>
        <begin position="1"/>
        <end position="87"/>
    </location>
</feature>
<proteinExistence type="inferred from homology"/>
<protein>
    <recommendedName>
        <fullName>NADH dehydrogenase [ubiquinone] 1 alpha subcomplex subunit 4-like 2</fullName>
    </recommendedName>
</protein>
<keyword id="KW-1185">Reference proteome</keyword>
<gene>
    <name type="primary">Ndufa4l2</name>
</gene>
<reference key="1">
    <citation type="journal article" date="2005" name="Science">
        <title>The transcriptional landscape of the mammalian genome.</title>
        <authorList>
            <person name="Carninci P."/>
            <person name="Kasukawa T."/>
            <person name="Katayama S."/>
            <person name="Gough J."/>
            <person name="Frith M.C."/>
            <person name="Maeda N."/>
            <person name="Oyama R."/>
            <person name="Ravasi T."/>
            <person name="Lenhard B."/>
            <person name="Wells C."/>
            <person name="Kodzius R."/>
            <person name="Shimokawa K."/>
            <person name="Bajic V.B."/>
            <person name="Brenner S.E."/>
            <person name="Batalov S."/>
            <person name="Forrest A.R."/>
            <person name="Zavolan M."/>
            <person name="Davis M.J."/>
            <person name="Wilming L.G."/>
            <person name="Aidinis V."/>
            <person name="Allen J.E."/>
            <person name="Ambesi-Impiombato A."/>
            <person name="Apweiler R."/>
            <person name="Aturaliya R.N."/>
            <person name="Bailey T.L."/>
            <person name="Bansal M."/>
            <person name="Baxter L."/>
            <person name="Beisel K.W."/>
            <person name="Bersano T."/>
            <person name="Bono H."/>
            <person name="Chalk A.M."/>
            <person name="Chiu K.P."/>
            <person name="Choudhary V."/>
            <person name="Christoffels A."/>
            <person name="Clutterbuck D.R."/>
            <person name="Crowe M.L."/>
            <person name="Dalla E."/>
            <person name="Dalrymple B.P."/>
            <person name="de Bono B."/>
            <person name="Della Gatta G."/>
            <person name="di Bernardo D."/>
            <person name="Down T."/>
            <person name="Engstrom P."/>
            <person name="Fagiolini M."/>
            <person name="Faulkner G."/>
            <person name="Fletcher C.F."/>
            <person name="Fukushima T."/>
            <person name="Furuno M."/>
            <person name="Futaki S."/>
            <person name="Gariboldi M."/>
            <person name="Georgii-Hemming P."/>
            <person name="Gingeras T.R."/>
            <person name="Gojobori T."/>
            <person name="Green R.E."/>
            <person name="Gustincich S."/>
            <person name="Harbers M."/>
            <person name="Hayashi Y."/>
            <person name="Hensch T.K."/>
            <person name="Hirokawa N."/>
            <person name="Hill D."/>
            <person name="Huminiecki L."/>
            <person name="Iacono M."/>
            <person name="Ikeo K."/>
            <person name="Iwama A."/>
            <person name="Ishikawa T."/>
            <person name="Jakt M."/>
            <person name="Kanapin A."/>
            <person name="Katoh M."/>
            <person name="Kawasawa Y."/>
            <person name="Kelso J."/>
            <person name="Kitamura H."/>
            <person name="Kitano H."/>
            <person name="Kollias G."/>
            <person name="Krishnan S.P."/>
            <person name="Kruger A."/>
            <person name="Kummerfeld S.K."/>
            <person name="Kurochkin I.V."/>
            <person name="Lareau L.F."/>
            <person name="Lazarevic D."/>
            <person name="Lipovich L."/>
            <person name="Liu J."/>
            <person name="Liuni S."/>
            <person name="McWilliam S."/>
            <person name="Madan Babu M."/>
            <person name="Madera M."/>
            <person name="Marchionni L."/>
            <person name="Matsuda H."/>
            <person name="Matsuzawa S."/>
            <person name="Miki H."/>
            <person name="Mignone F."/>
            <person name="Miyake S."/>
            <person name="Morris K."/>
            <person name="Mottagui-Tabar S."/>
            <person name="Mulder N."/>
            <person name="Nakano N."/>
            <person name="Nakauchi H."/>
            <person name="Ng P."/>
            <person name="Nilsson R."/>
            <person name="Nishiguchi S."/>
            <person name="Nishikawa S."/>
            <person name="Nori F."/>
            <person name="Ohara O."/>
            <person name="Okazaki Y."/>
            <person name="Orlando V."/>
            <person name="Pang K.C."/>
            <person name="Pavan W.J."/>
            <person name="Pavesi G."/>
            <person name="Pesole G."/>
            <person name="Petrovsky N."/>
            <person name="Piazza S."/>
            <person name="Reed J."/>
            <person name="Reid J.F."/>
            <person name="Ring B.Z."/>
            <person name="Ringwald M."/>
            <person name="Rost B."/>
            <person name="Ruan Y."/>
            <person name="Salzberg S.L."/>
            <person name="Sandelin A."/>
            <person name="Schneider C."/>
            <person name="Schoenbach C."/>
            <person name="Sekiguchi K."/>
            <person name="Semple C.A."/>
            <person name="Seno S."/>
            <person name="Sessa L."/>
            <person name="Sheng Y."/>
            <person name="Shibata Y."/>
            <person name="Shimada H."/>
            <person name="Shimada K."/>
            <person name="Silva D."/>
            <person name="Sinclair B."/>
            <person name="Sperling S."/>
            <person name="Stupka E."/>
            <person name="Sugiura K."/>
            <person name="Sultana R."/>
            <person name="Takenaka Y."/>
            <person name="Taki K."/>
            <person name="Tammoja K."/>
            <person name="Tan S.L."/>
            <person name="Tang S."/>
            <person name="Taylor M.S."/>
            <person name="Tegner J."/>
            <person name="Teichmann S.A."/>
            <person name="Ueda H.R."/>
            <person name="van Nimwegen E."/>
            <person name="Verardo R."/>
            <person name="Wei C.L."/>
            <person name="Yagi K."/>
            <person name="Yamanishi H."/>
            <person name="Zabarovsky E."/>
            <person name="Zhu S."/>
            <person name="Zimmer A."/>
            <person name="Hide W."/>
            <person name="Bult C."/>
            <person name="Grimmond S.M."/>
            <person name="Teasdale R.D."/>
            <person name="Liu E.T."/>
            <person name="Brusic V."/>
            <person name="Quackenbush J."/>
            <person name="Wahlestedt C."/>
            <person name="Mattick J.S."/>
            <person name="Hume D.A."/>
            <person name="Kai C."/>
            <person name="Sasaki D."/>
            <person name="Tomaru Y."/>
            <person name="Fukuda S."/>
            <person name="Kanamori-Katayama M."/>
            <person name="Suzuki M."/>
            <person name="Aoki J."/>
            <person name="Arakawa T."/>
            <person name="Iida J."/>
            <person name="Imamura K."/>
            <person name="Itoh M."/>
            <person name="Kato T."/>
            <person name="Kawaji H."/>
            <person name="Kawagashira N."/>
            <person name="Kawashima T."/>
            <person name="Kojima M."/>
            <person name="Kondo S."/>
            <person name="Konno H."/>
            <person name="Nakano K."/>
            <person name="Ninomiya N."/>
            <person name="Nishio T."/>
            <person name="Okada M."/>
            <person name="Plessy C."/>
            <person name="Shibata K."/>
            <person name="Shiraki T."/>
            <person name="Suzuki S."/>
            <person name="Tagami M."/>
            <person name="Waki K."/>
            <person name="Watahiki A."/>
            <person name="Okamura-Oho Y."/>
            <person name="Suzuki H."/>
            <person name="Kawai J."/>
            <person name="Hayashizaki Y."/>
        </authorList>
    </citation>
    <scope>NUCLEOTIDE SEQUENCE [LARGE SCALE MRNA]</scope>
    <source>
        <strain>C57BL/6J</strain>
        <tissue>Placenta</tissue>
    </source>
</reference>
<reference key="2">
    <citation type="journal article" date="2004" name="Genome Res.">
        <title>The status, quality, and expansion of the NIH full-length cDNA project: the Mammalian Gene Collection (MGC).</title>
        <authorList>
            <consortium name="The MGC Project Team"/>
        </authorList>
    </citation>
    <scope>NUCLEOTIDE SEQUENCE [LARGE SCALE MRNA]</scope>
    <source>
        <tissue>Thyroid</tissue>
    </source>
</reference>
<dbReference type="EMBL" id="AK131609">
    <property type="protein sequence ID" value="BAE20718.1"/>
    <property type="molecule type" value="mRNA"/>
</dbReference>
<dbReference type="EMBL" id="AK131662">
    <property type="protein sequence ID" value="BAE20749.1"/>
    <property type="molecule type" value="mRNA"/>
</dbReference>
<dbReference type="EMBL" id="BC099496">
    <property type="protein sequence ID" value="AAH99496.1"/>
    <property type="molecule type" value="mRNA"/>
</dbReference>
<dbReference type="CCDS" id="CCDS36080.1"/>
<dbReference type="RefSeq" id="NP_001092259.1">
    <property type="nucleotide sequence ID" value="NM_001098789.1"/>
</dbReference>
<dbReference type="SMR" id="Q4FZG9"/>
<dbReference type="BioGRID" id="240442">
    <property type="interactions" value="1"/>
</dbReference>
<dbReference type="FunCoup" id="Q4FZG9">
    <property type="interactions" value="137"/>
</dbReference>
<dbReference type="STRING" id="10090.ENSMUSP00000042185"/>
<dbReference type="PhosphoSitePlus" id="Q4FZG9"/>
<dbReference type="PaxDb" id="10090-ENSMUSP00000042185"/>
<dbReference type="ProteomicsDB" id="293776"/>
<dbReference type="Antibodypedia" id="43977">
    <property type="antibodies" value="149 antibodies from 23 providers"/>
</dbReference>
<dbReference type="Ensembl" id="ENSMUST00000035735.11">
    <property type="protein sequence ID" value="ENSMUSP00000042185.10"/>
    <property type="gene ID" value="ENSMUSG00000040280.11"/>
</dbReference>
<dbReference type="GeneID" id="407790"/>
<dbReference type="KEGG" id="mmu:407790"/>
<dbReference type="UCSC" id="uc007hjt.2">
    <property type="organism name" value="mouse"/>
</dbReference>
<dbReference type="AGR" id="MGI:3039567"/>
<dbReference type="CTD" id="56901"/>
<dbReference type="MGI" id="MGI:3039567">
    <property type="gene designation" value="Ndufa4l2"/>
</dbReference>
<dbReference type="VEuPathDB" id="HostDB:ENSMUSG00000040280"/>
<dbReference type="eggNOG" id="ENOG502SG4Q">
    <property type="taxonomic scope" value="Eukaryota"/>
</dbReference>
<dbReference type="GeneTree" id="ENSGT00940000161040"/>
<dbReference type="HOGENOM" id="CLU_181002_0_0_1"/>
<dbReference type="InParanoid" id="Q4FZG9"/>
<dbReference type="OMA" id="MDYKKLK"/>
<dbReference type="OrthoDB" id="5511684at2759"/>
<dbReference type="PhylomeDB" id="Q4FZG9"/>
<dbReference type="TreeFam" id="TF106383"/>
<dbReference type="BioGRID-ORCS" id="407790">
    <property type="hits" value="0 hits in 80 CRISPR screens"/>
</dbReference>
<dbReference type="ChiTaRS" id="Ndufa4l2">
    <property type="organism name" value="mouse"/>
</dbReference>
<dbReference type="PRO" id="PR:Q4FZG9"/>
<dbReference type="Proteomes" id="UP000000589">
    <property type="component" value="Chromosome 10"/>
</dbReference>
<dbReference type="RNAct" id="Q4FZG9">
    <property type="molecule type" value="protein"/>
</dbReference>
<dbReference type="Bgee" id="ENSMUSG00000040280">
    <property type="expression patterns" value="Expressed in esophagus and 116 other cell types or tissues"/>
</dbReference>
<dbReference type="InterPro" id="IPR010530">
    <property type="entry name" value="B12D"/>
</dbReference>
<dbReference type="PANTHER" id="PTHR14256:SF5">
    <property type="entry name" value="NADH DEHYDROGENASE [UBIQUINONE] 1 ALPHA SUBCOMPLEX SUBUNIT 4-LIKE 2"/>
    <property type="match status" value="1"/>
</dbReference>
<dbReference type="PANTHER" id="PTHR14256">
    <property type="entry name" value="NADH-UBIQUINONE OXIDOREDUCTASE MLRQ SUBUNIT"/>
    <property type="match status" value="1"/>
</dbReference>
<dbReference type="Pfam" id="PF06522">
    <property type="entry name" value="B12D"/>
    <property type="match status" value="1"/>
</dbReference>
<accession>Q4FZG9</accession>